<organism>
    <name type="scientific">Chelativorans sp. (strain BNC1)</name>
    <dbReference type="NCBI Taxonomy" id="266779"/>
    <lineage>
        <taxon>Bacteria</taxon>
        <taxon>Pseudomonadati</taxon>
        <taxon>Pseudomonadota</taxon>
        <taxon>Alphaproteobacteria</taxon>
        <taxon>Hyphomicrobiales</taxon>
        <taxon>Phyllobacteriaceae</taxon>
        <taxon>Chelativorans</taxon>
    </lineage>
</organism>
<keyword id="KW-0227">DNA damage</keyword>
<keyword id="KW-0233">DNA recombination</keyword>
<keyword id="KW-0234">DNA repair</keyword>
<feature type="chain" id="PRO_0000264822" description="DNA repair protein RecO">
    <location>
        <begin position="1"/>
        <end position="248"/>
    </location>
</feature>
<name>RECO_CHESB</name>
<proteinExistence type="inferred from homology"/>
<comment type="function">
    <text evidence="1">Involved in DNA repair and RecF pathway recombination.</text>
</comment>
<comment type="similarity">
    <text evidence="1">Belongs to the RecO family.</text>
</comment>
<gene>
    <name evidence="1" type="primary">recO</name>
    <name type="ordered locus">Meso_0952</name>
</gene>
<reference key="1">
    <citation type="submission" date="2006-06" db="EMBL/GenBank/DDBJ databases">
        <title>Complete sequence of chromosome of Mesorhizobium sp. BNC1.</title>
        <authorList>
            <consortium name="US DOE Joint Genome Institute"/>
            <person name="Copeland A."/>
            <person name="Lucas S."/>
            <person name="Lapidus A."/>
            <person name="Barry K."/>
            <person name="Detter J.C."/>
            <person name="Glavina del Rio T."/>
            <person name="Hammon N."/>
            <person name="Israni S."/>
            <person name="Dalin E."/>
            <person name="Tice H."/>
            <person name="Pitluck S."/>
            <person name="Chertkov O."/>
            <person name="Brettin T."/>
            <person name="Bruce D."/>
            <person name="Han C."/>
            <person name="Tapia R."/>
            <person name="Gilna P."/>
            <person name="Schmutz J."/>
            <person name="Larimer F."/>
            <person name="Land M."/>
            <person name="Hauser L."/>
            <person name="Kyrpides N."/>
            <person name="Mikhailova N."/>
            <person name="Richardson P."/>
        </authorList>
    </citation>
    <scope>NUCLEOTIDE SEQUENCE [LARGE SCALE GENOMIC DNA]</scope>
    <source>
        <strain>BNC1</strain>
    </source>
</reference>
<sequence>MEWHDEGIVLGTRRHGESSVILEAITAAHGRHLGLVRGGRSKRMQPVLQPGNRVDLTWRARLDEHLGLFQVEPLELNAARLLNSAVAIYGIQLLAAHLRLLPERDPHPGLFEALGVIAAHLDEPETAGVLVARFELAVLDALGFGLDLARCAVTGSREDLAYVSPKTGRAVTREAGAPWADKLLPLPTFLTAGNEALYDRAILSQAFALTGFFFARHVYEPRGLTEPEARAGFLAAVMRNLPEGESAP</sequence>
<dbReference type="EMBL" id="CP000390">
    <property type="protein sequence ID" value="ABG62349.1"/>
    <property type="molecule type" value="Genomic_DNA"/>
</dbReference>
<dbReference type="SMR" id="Q11JS6"/>
<dbReference type="STRING" id="266779.Meso_0952"/>
<dbReference type="KEGG" id="mes:Meso_0952"/>
<dbReference type="eggNOG" id="COG1381">
    <property type="taxonomic scope" value="Bacteria"/>
</dbReference>
<dbReference type="HOGENOM" id="CLU_086029_0_0_5"/>
<dbReference type="OrthoDB" id="9804792at2"/>
<dbReference type="GO" id="GO:0043590">
    <property type="term" value="C:bacterial nucleoid"/>
    <property type="evidence" value="ECO:0007669"/>
    <property type="project" value="TreeGrafter"/>
</dbReference>
<dbReference type="GO" id="GO:0006310">
    <property type="term" value="P:DNA recombination"/>
    <property type="evidence" value="ECO:0007669"/>
    <property type="project" value="UniProtKB-UniRule"/>
</dbReference>
<dbReference type="GO" id="GO:0006302">
    <property type="term" value="P:double-strand break repair"/>
    <property type="evidence" value="ECO:0007669"/>
    <property type="project" value="TreeGrafter"/>
</dbReference>
<dbReference type="Gene3D" id="2.40.50.140">
    <property type="entry name" value="Nucleic acid-binding proteins"/>
    <property type="match status" value="1"/>
</dbReference>
<dbReference type="Gene3D" id="1.20.1440.120">
    <property type="entry name" value="Recombination protein O, C-terminal domain"/>
    <property type="match status" value="1"/>
</dbReference>
<dbReference type="HAMAP" id="MF_00201">
    <property type="entry name" value="RecO"/>
    <property type="match status" value="1"/>
</dbReference>
<dbReference type="InterPro" id="IPR037278">
    <property type="entry name" value="ARFGAP/RecO"/>
</dbReference>
<dbReference type="InterPro" id="IPR022572">
    <property type="entry name" value="DNA_rep/recomb_RecO_N"/>
</dbReference>
<dbReference type="InterPro" id="IPR012340">
    <property type="entry name" value="NA-bd_OB-fold"/>
</dbReference>
<dbReference type="InterPro" id="IPR003717">
    <property type="entry name" value="RecO"/>
</dbReference>
<dbReference type="InterPro" id="IPR042242">
    <property type="entry name" value="RecO_C"/>
</dbReference>
<dbReference type="NCBIfam" id="TIGR00613">
    <property type="entry name" value="reco"/>
    <property type="match status" value="1"/>
</dbReference>
<dbReference type="PANTHER" id="PTHR33991">
    <property type="entry name" value="DNA REPAIR PROTEIN RECO"/>
    <property type="match status" value="1"/>
</dbReference>
<dbReference type="PANTHER" id="PTHR33991:SF1">
    <property type="entry name" value="DNA REPAIR PROTEIN RECO"/>
    <property type="match status" value="1"/>
</dbReference>
<dbReference type="Pfam" id="PF02565">
    <property type="entry name" value="RecO_C"/>
    <property type="match status" value="1"/>
</dbReference>
<dbReference type="Pfam" id="PF11967">
    <property type="entry name" value="RecO_N"/>
    <property type="match status" value="1"/>
</dbReference>
<dbReference type="SUPFAM" id="SSF57863">
    <property type="entry name" value="ArfGap/RecO-like zinc finger"/>
    <property type="match status" value="1"/>
</dbReference>
<dbReference type="SUPFAM" id="SSF50249">
    <property type="entry name" value="Nucleic acid-binding proteins"/>
    <property type="match status" value="1"/>
</dbReference>
<protein>
    <recommendedName>
        <fullName evidence="1">DNA repair protein RecO</fullName>
    </recommendedName>
    <alternativeName>
        <fullName evidence="1">Recombination protein O</fullName>
    </alternativeName>
</protein>
<evidence type="ECO:0000255" key="1">
    <source>
        <dbReference type="HAMAP-Rule" id="MF_00201"/>
    </source>
</evidence>
<accession>Q11JS6</accession>